<dbReference type="EC" id="1.1.1.103" evidence="1"/>
<dbReference type="EMBL" id="CP001044">
    <property type="protein sequence ID" value="ACC73281.1"/>
    <property type="molecule type" value="Genomic_DNA"/>
</dbReference>
<dbReference type="RefSeq" id="WP_012403454.1">
    <property type="nucleotide sequence ID" value="NC_010623.1"/>
</dbReference>
<dbReference type="SMR" id="B2JPU0"/>
<dbReference type="STRING" id="391038.Bphy_4160"/>
<dbReference type="KEGG" id="bph:Bphy_4160"/>
<dbReference type="eggNOG" id="COG1063">
    <property type="taxonomic scope" value="Bacteria"/>
</dbReference>
<dbReference type="HOGENOM" id="CLU_026673_11_0_4"/>
<dbReference type="OrthoDB" id="5484143at2"/>
<dbReference type="UniPathway" id="UPA00046">
    <property type="reaction ID" value="UER00505"/>
</dbReference>
<dbReference type="Proteomes" id="UP000001192">
    <property type="component" value="Chromosome 2"/>
</dbReference>
<dbReference type="GO" id="GO:0005737">
    <property type="term" value="C:cytoplasm"/>
    <property type="evidence" value="ECO:0007669"/>
    <property type="project" value="UniProtKB-SubCell"/>
</dbReference>
<dbReference type="GO" id="GO:0008743">
    <property type="term" value="F:L-threonine 3-dehydrogenase activity"/>
    <property type="evidence" value="ECO:0007669"/>
    <property type="project" value="UniProtKB-UniRule"/>
</dbReference>
<dbReference type="GO" id="GO:0008270">
    <property type="term" value="F:zinc ion binding"/>
    <property type="evidence" value="ECO:0007669"/>
    <property type="project" value="UniProtKB-UniRule"/>
</dbReference>
<dbReference type="GO" id="GO:0019518">
    <property type="term" value="P:L-threonine catabolic process to glycine"/>
    <property type="evidence" value="ECO:0007669"/>
    <property type="project" value="UniProtKB-UniPathway"/>
</dbReference>
<dbReference type="Gene3D" id="3.90.180.10">
    <property type="entry name" value="Medium-chain alcohol dehydrogenases, catalytic domain"/>
    <property type="match status" value="1"/>
</dbReference>
<dbReference type="Gene3D" id="3.40.50.720">
    <property type="entry name" value="NAD(P)-binding Rossmann-like Domain"/>
    <property type="match status" value="1"/>
</dbReference>
<dbReference type="HAMAP" id="MF_00627">
    <property type="entry name" value="Thr_dehydrog"/>
    <property type="match status" value="1"/>
</dbReference>
<dbReference type="InterPro" id="IPR013149">
    <property type="entry name" value="ADH-like_C"/>
</dbReference>
<dbReference type="InterPro" id="IPR013154">
    <property type="entry name" value="ADH-like_N"/>
</dbReference>
<dbReference type="InterPro" id="IPR002328">
    <property type="entry name" value="ADH_Zn_CS"/>
</dbReference>
<dbReference type="InterPro" id="IPR011032">
    <property type="entry name" value="GroES-like_sf"/>
</dbReference>
<dbReference type="InterPro" id="IPR004627">
    <property type="entry name" value="L-Threonine_3-DHase"/>
</dbReference>
<dbReference type="InterPro" id="IPR036291">
    <property type="entry name" value="NAD(P)-bd_dom_sf"/>
</dbReference>
<dbReference type="InterPro" id="IPR020843">
    <property type="entry name" value="PKS_ER"/>
</dbReference>
<dbReference type="InterPro" id="IPR050129">
    <property type="entry name" value="Zn_alcohol_dh"/>
</dbReference>
<dbReference type="NCBIfam" id="NF003808">
    <property type="entry name" value="PRK05396.1"/>
    <property type="match status" value="1"/>
</dbReference>
<dbReference type="NCBIfam" id="TIGR00692">
    <property type="entry name" value="tdh"/>
    <property type="match status" value="1"/>
</dbReference>
<dbReference type="PANTHER" id="PTHR43401">
    <property type="entry name" value="L-THREONINE 3-DEHYDROGENASE"/>
    <property type="match status" value="1"/>
</dbReference>
<dbReference type="PANTHER" id="PTHR43401:SF2">
    <property type="entry name" value="L-THREONINE 3-DEHYDROGENASE"/>
    <property type="match status" value="1"/>
</dbReference>
<dbReference type="Pfam" id="PF08240">
    <property type="entry name" value="ADH_N"/>
    <property type="match status" value="1"/>
</dbReference>
<dbReference type="Pfam" id="PF00107">
    <property type="entry name" value="ADH_zinc_N"/>
    <property type="match status" value="1"/>
</dbReference>
<dbReference type="SMART" id="SM00829">
    <property type="entry name" value="PKS_ER"/>
    <property type="match status" value="1"/>
</dbReference>
<dbReference type="SUPFAM" id="SSF50129">
    <property type="entry name" value="GroES-like"/>
    <property type="match status" value="1"/>
</dbReference>
<dbReference type="SUPFAM" id="SSF51735">
    <property type="entry name" value="NAD(P)-binding Rossmann-fold domains"/>
    <property type="match status" value="1"/>
</dbReference>
<dbReference type="PROSITE" id="PS00059">
    <property type="entry name" value="ADH_ZINC"/>
    <property type="match status" value="1"/>
</dbReference>
<organism>
    <name type="scientific">Paraburkholderia phymatum (strain DSM 17167 / CIP 108236 / LMG 21445 / STM815)</name>
    <name type="common">Burkholderia phymatum</name>
    <dbReference type="NCBI Taxonomy" id="391038"/>
    <lineage>
        <taxon>Bacteria</taxon>
        <taxon>Pseudomonadati</taxon>
        <taxon>Pseudomonadota</taxon>
        <taxon>Betaproteobacteria</taxon>
        <taxon>Burkholderiales</taxon>
        <taxon>Burkholderiaceae</taxon>
        <taxon>Paraburkholderia</taxon>
    </lineage>
</organism>
<gene>
    <name evidence="1" type="primary">tdh</name>
    <name type="ordered locus">Bphy_4160</name>
</gene>
<sequence length="342" mass="37583">MKALAKLERAPGLTLTRVKKPEVGHNDVMIRITRTAICGTDIHIWKWDDWAQKTIPVPMHVGHEYVGEIVEMGQEVRGFSIGDRVSGEGHITCGFCRNCRAGRRHLCRNTVGVGVNREGAFAEYLVIPAFNAFKIPPEISDDLAAIFDPFGNATHTALSFNLVGEDVLITGAGPIGIMAVAIAKHVGARNVVITDVNDYRLELARKMGATRAVNVSRETLRDVMRDLHMTEGFDVGLEMSGVPSAFTSMLEAMNHGGKIALLGIPPAQTAIDWTQVIFKGLEIKGIYGREMFETWYKMVAMLQSGLDLSPILTHRFAVDDYEKAFATMLSGESGKVILDWTV</sequence>
<name>TDH_PARP8</name>
<evidence type="ECO:0000255" key="1">
    <source>
        <dbReference type="HAMAP-Rule" id="MF_00627"/>
    </source>
</evidence>
<feature type="chain" id="PRO_1000130541" description="L-threonine 3-dehydrogenase">
    <location>
        <begin position="1"/>
        <end position="342"/>
    </location>
</feature>
<feature type="active site" description="Charge relay system" evidence="1">
    <location>
        <position position="40"/>
    </location>
</feature>
<feature type="active site" description="Charge relay system" evidence="1">
    <location>
        <position position="43"/>
    </location>
</feature>
<feature type="binding site" evidence="1">
    <location>
        <position position="38"/>
    </location>
    <ligand>
        <name>Zn(2+)</name>
        <dbReference type="ChEBI" id="CHEBI:29105"/>
        <label>1</label>
        <note>catalytic</note>
    </ligand>
</feature>
<feature type="binding site" evidence="1">
    <location>
        <position position="63"/>
    </location>
    <ligand>
        <name>Zn(2+)</name>
        <dbReference type="ChEBI" id="CHEBI:29105"/>
        <label>1</label>
        <note>catalytic</note>
    </ligand>
</feature>
<feature type="binding site" evidence="1">
    <location>
        <position position="64"/>
    </location>
    <ligand>
        <name>Zn(2+)</name>
        <dbReference type="ChEBI" id="CHEBI:29105"/>
        <label>1</label>
        <note>catalytic</note>
    </ligand>
</feature>
<feature type="binding site" evidence="1">
    <location>
        <position position="93"/>
    </location>
    <ligand>
        <name>Zn(2+)</name>
        <dbReference type="ChEBI" id="CHEBI:29105"/>
        <label>2</label>
    </ligand>
</feature>
<feature type="binding site" evidence="1">
    <location>
        <position position="96"/>
    </location>
    <ligand>
        <name>Zn(2+)</name>
        <dbReference type="ChEBI" id="CHEBI:29105"/>
        <label>2</label>
    </ligand>
</feature>
<feature type="binding site" evidence="1">
    <location>
        <position position="99"/>
    </location>
    <ligand>
        <name>Zn(2+)</name>
        <dbReference type="ChEBI" id="CHEBI:29105"/>
        <label>2</label>
    </ligand>
</feature>
<feature type="binding site" evidence="1">
    <location>
        <position position="107"/>
    </location>
    <ligand>
        <name>Zn(2+)</name>
        <dbReference type="ChEBI" id="CHEBI:29105"/>
        <label>2</label>
    </ligand>
</feature>
<feature type="binding site" evidence="1">
    <location>
        <position position="175"/>
    </location>
    <ligand>
        <name>NAD(+)</name>
        <dbReference type="ChEBI" id="CHEBI:57540"/>
    </ligand>
</feature>
<feature type="binding site" evidence="1">
    <location>
        <position position="195"/>
    </location>
    <ligand>
        <name>NAD(+)</name>
        <dbReference type="ChEBI" id="CHEBI:57540"/>
    </ligand>
</feature>
<feature type="binding site" evidence="1">
    <location>
        <position position="200"/>
    </location>
    <ligand>
        <name>NAD(+)</name>
        <dbReference type="ChEBI" id="CHEBI:57540"/>
    </ligand>
</feature>
<feature type="binding site" evidence="1">
    <location>
        <begin position="262"/>
        <end position="264"/>
    </location>
    <ligand>
        <name>NAD(+)</name>
        <dbReference type="ChEBI" id="CHEBI:57540"/>
    </ligand>
</feature>
<feature type="binding site" evidence="1">
    <location>
        <begin position="286"/>
        <end position="287"/>
    </location>
    <ligand>
        <name>NAD(+)</name>
        <dbReference type="ChEBI" id="CHEBI:57540"/>
    </ligand>
</feature>
<feature type="site" description="Important for catalytic activity for the proton relay mechanism but does not participate directly in the coordination of zinc atom" evidence="1">
    <location>
        <position position="148"/>
    </location>
</feature>
<keyword id="KW-0963">Cytoplasm</keyword>
<keyword id="KW-0479">Metal-binding</keyword>
<keyword id="KW-0520">NAD</keyword>
<keyword id="KW-0560">Oxidoreductase</keyword>
<keyword id="KW-1185">Reference proteome</keyword>
<keyword id="KW-0862">Zinc</keyword>
<reference key="1">
    <citation type="journal article" date="2014" name="Stand. Genomic Sci.">
        <title>Complete genome sequence of Burkholderia phymatum STM815(T), a broad host range and efficient nitrogen-fixing symbiont of Mimosa species.</title>
        <authorList>
            <person name="Moulin L."/>
            <person name="Klonowska A."/>
            <person name="Caroline B."/>
            <person name="Booth K."/>
            <person name="Vriezen J.A."/>
            <person name="Melkonian R."/>
            <person name="James E.K."/>
            <person name="Young J.P."/>
            <person name="Bena G."/>
            <person name="Hauser L."/>
            <person name="Land M."/>
            <person name="Kyrpides N."/>
            <person name="Bruce D."/>
            <person name="Chain P."/>
            <person name="Copeland A."/>
            <person name="Pitluck S."/>
            <person name="Woyke T."/>
            <person name="Lizotte-Waniewski M."/>
            <person name="Bristow J."/>
            <person name="Riley M."/>
        </authorList>
    </citation>
    <scope>NUCLEOTIDE SEQUENCE [LARGE SCALE GENOMIC DNA]</scope>
    <source>
        <strain>DSM 17167 / CIP 108236 / LMG 21445 / STM815</strain>
    </source>
</reference>
<accession>B2JPU0</accession>
<protein>
    <recommendedName>
        <fullName evidence="1">L-threonine 3-dehydrogenase</fullName>
        <shortName evidence="1">TDH</shortName>
        <ecNumber evidence="1">1.1.1.103</ecNumber>
    </recommendedName>
</protein>
<comment type="function">
    <text evidence="1">Catalyzes the NAD(+)-dependent oxidation of L-threonine to 2-amino-3-ketobutyrate.</text>
</comment>
<comment type="catalytic activity">
    <reaction evidence="1">
        <text>L-threonine + NAD(+) = (2S)-2-amino-3-oxobutanoate + NADH + H(+)</text>
        <dbReference type="Rhea" id="RHEA:13161"/>
        <dbReference type="ChEBI" id="CHEBI:15378"/>
        <dbReference type="ChEBI" id="CHEBI:57540"/>
        <dbReference type="ChEBI" id="CHEBI:57926"/>
        <dbReference type="ChEBI" id="CHEBI:57945"/>
        <dbReference type="ChEBI" id="CHEBI:78948"/>
        <dbReference type="EC" id="1.1.1.103"/>
    </reaction>
</comment>
<comment type="cofactor">
    <cofactor evidence="1">
        <name>Zn(2+)</name>
        <dbReference type="ChEBI" id="CHEBI:29105"/>
    </cofactor>
    <text evidence="1">Binds 2 Zn(2+) ions per subunit.</text>
</comment>
<comment type="pathway">
    <text evidence="1">Amino-acid degradation; L-threonine degradation via oxydo-reductase pathway; glycine from L-threonine: step 1/2.</text>
</comment>
<comment type="subunit">
    <text evidence="1">Homotetramer.</text>
</comment>
<comment type="subcellular location">
    <subcellularLocation>
        <location evidence="1">Cytoplasm</location>
    </subcellularLocation>
</comment>
<comment type="similarity">
    <text evidence="1">Belongs to the zinc-containing alcohol dehydrogenase family.</text>
</comment>
<proteinExistence type="inferred from homology"/>